<organism>
    <name type="scientific">Stutzerimonas stutzeri</name>
    <name type="common">Pseudomonas stutzeri</name>
    <dbReference type="NCBI Taxonomy" id="316"/>
    <lineage>
        <taxon>Bacteria</taxon>
        <taxon>Pseudomonadati</taxon>
        <taxon>Pseudomonadota</taxon>
        <taxon>Gammaproteobacteria</taxon>
        <taxon>Pseudomonadales</taxon>
        <taxon>Pseudomonadaceae</taxon>
        <taxon>Stutzerimonas</taxon>
    </lineage>
</organism>
<sequence length="23" mass="2809">MWTKPSYTDLRIGFEVTLYFANR</sequence>
<name>PQQA_STUST</name>
<comment type="function">
    <text evidence="1">Required for coenzyme pyrroloquinoline quinone (PQQ) biosynthesis. PQQ is probably formed by cross-linking a specific glutamate to a specific tyrosine residue and excising these residues from the peptide (By similarity).</text>
</comment>
<comment type="pathway">
    <text>Cofactor biosynthesis; pyrroloquinoline quinone biosynthesis.</text>
</comment>
<comment type="similarity">
    <text evidence="2">Belongs to the PqqA family.</text>
</comment>
<feature type="chain" id="PRO_0000220317" description="Coenzyme PQQ synthesis protein A">
    <location>
        <begin position="1"/>
        <end position="23"/>
    </location>
</feature>
<feature type="cross-link" description="Pyrroloquinoline quinone (Glu-Tyr)" evidence="1">
    <location>
        <begin position="15"/>
        <end position="19"/>
    </location>
</feature>
<gene>
    <name type="primary">pqqA</name>
</gene>
<proteinExistence type="inferred from homology"/>
<reference key="1">
    <citation type="submission" date="1999-08" db="EMBL/GenBank/DDBJ databases">
        <title>Identification and characterization of genes activated by 2-chloroethanol in Pseudomonas stutzeri BC-2.</title>
        <authorList>
            <person name="Chang C.-H."/>
            <person name="Herrick J.B."/>
            <person name="Okinaka R.T."/>
            <person name="Brainard J.B."/>
            <person name="Terwilliger T.C."/>
        </authorList>
    </citation>
    <scope>NUCLEOTIDE SEQUENCE [GENOMIC DNA]</scope>
    <source>
        <strain>BC-2</strain>
    </source>
</reference>
<keyword id="KW-0884">PQQ biosynthesis</keyword>
<protein>
    <recommendedName>
        <fullName>Coenzyme PQQ synthesis protein A</fullName>
    </recommendedName>
    <alternativeName>
        <fullName>Pyrroloquinoline quinone biosynthesis protein A</fullName>
    </alternativeName>
</protein>
<evidence type="ECO:0000250" key="1"/>
<evidence type="ECO:0000305" key="2"/>
<dbReference type="EMBL" id="AF176640">
    <property type="protein sequence ID" value="AAG09250.1"/>
    <property type="molecule type" value="Genomic_DNA"/>
</dbReference>
<dbReference type="UniPathway" id="UPA00539"/>
<dbReference type="GO" id="GO:0018189">
    <property type="term" value="P:pyrroloquinoline quinone biosynthetic process"/>
    <property type="evidence" value="ECO:0007669"/>
    <property type="project" value="UniProtKB-UniRule"/>
</dbReference>
<dbReference type="HAMAP" id="MF_00656">
    <property type="entry name" value="PQQ_syn_PqqA"/>
    <property type="match status" value="1"/>
</dbReference>
<dbReference type="InterPro" id="IPR011725">
    <property type="entry name" value="PQQ_synth_PqqA"/>
</dbReference>
<dbReference type="NCBIfam" id="TIGR02107">
    <property type="entry name" value="PQQ_syn_pqqA"/>
    <property type="match status" value="1"/>
</dbReference>
<dbReference type="Pfam" id="PF08042">
    <property type="entry name" value="PqqA"/>
    <property type="match status" value="1"/>
</dbReference>
<accession>Q9F9U1</accession>